<dbReference type="EMBL" id="AY653733">
    <property type="protein sequence ID" value="AAV50670.1"/>
    <property type="molecule type" value="Genomic_DNA"/>
</dbReference>
<dbReference type="KEGG" id="vg:9925022"/>
<dbReference type="OrthoDB" id="35222at10239"/>
<dbReference type="Proteomes" id="UP000001134">
    <property type="component" value="Genome"/>
</dbReference>
<dbReference type="GO" id="GO:0016020">
    <property type="term" value="C:membrane"/>
    <property type="evidence" value="ECO:0007669"/>
    <property type="project" value="UniProtKB-SubCell"/>
</dbReference>
<accession>Q5UQJ5</accession>
<proteinExistence type="predicted"/>
<organismHost>
    <name type="scientific">Acanthamoeba polyphaga</name>
    <name type="common">Amoeba</name>
    <dbReference type="NCBI Taxonomy" id="5757"/>
</organismHost>
<name>YR401_MIMIV</name>
<keyword id="KW-0472">Membrane</keyword>
<keyword id="KW-1185">Reference proteome</keyword>
<keyword id="KW-0812">Transmembrane</keyword>
<keyword id="KW-1133">Transmembrane helix</keyword>
<feature type="chain" id="PRO_0000243990" description="Uncharacterized protein R401">
    <location>
        <begin position="1"/>
        <end position="226"/>
    </location>
</feature>
<feature type="transmembrane region" description="Helical" evidence="1">
    <location>
        <begin position="203"/>
        <end position="225"/>
    </location>
</feature>
<reference key="1">
    <citation type="journal article" date="2004" name="Science">
        <title>The 1.2-megabase genome sequence of Mimivirus.</title>
        <authorList>
            <person name="Raoult D."/>
            <person name="Audic S."/>
            <person name="Robert C."/>
            <person name="Abergel C."/>
            <person name="Renesto P."/>
            <person name="Ogata H."/>
            <person name="La Scola B."/>
            <person name="Susan M."/>
            <person name="Claverie J.-M."/>
        </authorList>
    </citation>
    <scope>NUCLEOTIDE SEQUENCE [LARGE SCALE GENOMIC DNA]</scope>
    <source>
        <strain>Rowbotham-Bradford</strain>
    </source>
</reference>
<protein>
    <recommendedName>
        <fullName>Uncharacterized protein R401</fullName>
    </recommendedName>
</protein>
<evidence type="ECO:0000255" key="1"/>
<evidence type="ECO:0000305" key="2"/>
<sequence>MIRILSLNLIGLACGIGLYYDFQNRKHFKEVIDNNIPINGNNIITGTITCENTDIDNIFVHDRLPIPYSMSEDPFSLFELHGKNKIKFYDCDNYYYNDGLRQKYFKIGTVKYFDLWYIEDNFYVEKSNIKINGINLIYDKNLKIFYPKHDYHYLNSNKYLVRKHIPNNSNVTAFGKINKYGMIKIESIGDSYNVIDYVAEKYFGISDIYTSTLSFGLIISLFYLLK</sequence>
<comment type="subcellular location">
    <subcellularLocation>
        <location evidence="2">Membrane</location>
        <topology evidence="2">Single-pass membrane protein</topology>
    </subcellularLocation>
</comment>
<organism>
    <name type="scientific">Acanthamoeba polyphaga mimivirus</name>
    <name type="common">APMV</name>
    <dbReference type="NCBI Taxonomy" id="212035"/>
    <lineage>
        <taxon>Viruses</taxon>
        <taxon>Varidnaviria</taxon>
        <taxon>Bamfordvirae</taxon>
        <taxon>Nucleocytoviricota</taxon>
        <taxon>Megaviricetes</taxon>
        <taxon>Imitervirales</taxon>
        <taxon>Mimiviridae</taxon>
        <taxon>Megamimivirinae</taxon>
        <taxon>Mimivirus</taxon>
        <taxon>Mimivirus bradfordmassiliense</taxon>
    </lineage>
</organism>
<gene>
    <name type="ordered locus">MIMI_R401</name>
</gene>